<dbReference type="EC" id="2.7.8.11" evidence="3"/>
<dbReference type="EMBL" id="AJ000539">
    <property type="protein sequence ID" value="CAA04172.1"/>
    <property type="molecule type" value="mRNA"/>
</dbReference>
<dbReference type="EMBL" id="AC012563">
    <property type="protein sequence ID" value="AAG52009.1"/>
    <property type="molecule type" value="Genomic_DNA"/>
</dbReference>
<dbReference type="EMBL" id="CP002684">
    <property type="protein sequence ID" value="AEE34734.1"/>
    <property type="molecule type" value="Genomic_DNA"/>
</dbReference>
<dbReference type="EMBL" id="AY140047">
    <property type="protein sequence ID" value="AAM98188.1"/>
    <property type="molecule type" value="mRNA"/>
</dbReference>
<dbReference type="EMBL" id="AY087327">
    <property type="protein sequence ID" value="AAM64877.1"/>
    <property type="molecule type" value="mRNA"/>
</dbReference>
<dbReference type="PIR" id="T52643">
    <property type="entry name" value="T52643"/>
</dbReference>
<dbReference type="RefSeq" id="NP_176967.1">
    <property type="nucleotide sequence ID" value="NM_105470.3"/>
</dbReference>
<dbReference type="SMR" id="Q8LBA6"/>
<dbReference type="FunCoup" id="Q8LBA6">
    <property type="interactions" value="4164"/>
</dbReference>
<dbReference type="STRING" id="3702.Q8LBA6"/>
<dbReference type="PaxDb" id="3702-AT1G68000.1"/>
<dbReference type="ProteomicsDB" id="235089"/>
<dbReference type="EnsemblPlants" id="AT1G68000.1">
    <property type="protein sequence ID" value="AT1G68000.1"/>
    <property type="gene ID" value="AT1G68000"/>
</dbReference>
<dbReference type="GeneID" id="843128"/>
<dbReference type="Gramene" id="AT1G68000.1">
    <property type="protein sequence ID" value="AT1G68000.1"/>
    <property type="gene ID" value="AT1G68000"/>
</dbReference>
<dbReference type="KEGG" id="ath:AT1G68000"/>
<dbReference type="Araport" id="AT1G68000"/>
<dbReference type="TAIR" id="AT1G68000">
    <property type="gene designation" value="PIS1"/>
</dbReference>
<dbReference type="eggNOG" id="KOG3240">
    <property type="taxonomic scope" value="Eukaryota"/>
</dbReference>
<dbReference type="HOGENOM" id="CLU_067602_2_1_1"/>
<dbReference type="InParanoid" id="Q8LBA6"/>
<dbReference type="OMA" id="VTGVFFY"/>
<dbReference type="PhylomeDB" id="Q8LBA6"/>
<dbReference type="BRENDA" id="2.7.8.11">
    <property type="organism ID" value="399"/>
</dbReference>
<dbReference type="SABIO-RK" id="Q8LBA6"/>
<dbReference type="PRO" id="PR:Q8LBA6"/>
<dbReference type="Proteomes" id="UP000006548">
    <property type="component" value="Chromosome 1"/>
</dbReference>
<dbReference type="ExpressionAtlas" id="Q8LBA6">
    <property type="expression patterns" value="baseline and differential"/>
</dbReference>
<dbReference type="GO" id="GO:0005783">
    <property type="term" value="C:endoplasmic reticulum"/>
    <property type="evidence" value="ECO:0000314"/>
    <property type="project" value="TAIR"/>
</dbReference>
<dbReference type="GO" id="GO:0005794">
    <property type="term" value="C:Golgi apparatus"/>
    <property type="evidence" value="ECO:0000314"/>
    <property type="project" value="TAIR"/>
</dbReference>
<dbReference type="GO" id="GO:0016020">
    <property type="term" value="C:membrane"/>
    <property type="evidence" value="ECO:0000314"/>
    <property type="project" value="TAIR"/>
</dbReference>
<dbReference type="GO" id="GO:0003881">
    <property type="term" value="F:CDP-diacylglycerol-inositol 3-phosphatidyltransferase activity"/>
    <property type="evidence" value="ECO:0000314"/>
    <property type="project" value="TAIR"/>
</dbReference>
<dbReference type="GO" id="GO:0046872">
    <property type="term" value="F:metal ion binding"/>
    <property type="evidence" value="ECO:0007669"/>
    <property type="project" value="UniProtKB-KW"/>
</dbReference>
<dbReference type="GO" id="GO:0008654">
    <property type="term" value="P:phospholipid biosynthetic process"/>
    <property type="evidence" value="ECO:0000314"/>
    <property type="project" value="TAIR"/>
</dbReference>
<dbReference type="FunFam" id="1.20.120.1760:FF:000003">
    <property type="entry name" value="CDP-diacylglycerol--inositol 3-phosphatidyltransferase"/>
    <property type="match status" value="1"/>
</dbReference>
<dbReference type="Gene3D" id="1.20.120.1760">
    <property type="match status" value="1"/>
</dbReference>
<dbReference type="InterPro" id="IPR000462">
    <property type="entry name" value="CDP-OH_P_trans"/>
</dbReference>
<dbReference type="InterPro" id="IPR043130">
    <property type="entry name" value="CDP-OH_PTrfase_TM_dom"/>
</dbReference>
<dbReference type="InterPro" id="IPR048254">
    <property type="entry name" value="CDP_ALCOHOL_P_TRANSF_CS"/>
</dbReference>
<dbReference type="InterPro" id="IPR014387">
    <property type="entry name" value="CDP_diag_ino_3_P_euk"/>
</dbReference>
<dbReference type="PANTHER" id="PTHR15362:SF25">
    <property type="entry name" value="CDP-DIACYLGLYCEROL--INOSITOL 3-PHOSPHATIDYLTRANSFERASE 1"/>
    <property type="match status" value="1"/>
</dbReference>
<dbReference type="PANTHER" id="PTHR15362">
    <property type="entry name" value="PHOSPHATIDYLINOSITOL SYNTHASE"/>
    <property type="match status" value="1"/>
</dbReference>
<dbReference type="Pfam" id="PF01066">
    <property type="entry name" value="CDP-OH_P_transf"/>
    <property type="match status" value="1"/>
</dbReference>
<dbReference type="PIRSF" id="PIRSF000848">
    <property type="entry name" value="CDP_diag_ino_3_P"/>
    <property type="match status" value="1"/>
</dbReference>
<dbReference type="PROSITE" id="PS00379">
    <property type="entry name" value="CDP_ALCOHOL_P_TRANSF"/>
    <property type="match status" value="1"/>
</dbReference>
<keyword id="KW-0444">Lipid biosynthesis</keyword>
<keyword id="KW-0443">Lipid metabolism</keyword>
<keyword id="KW-0460">Magnesium</keyword>
<keyword id="KW-0464">Manganese</keyword>
<keyword id="KW-0472">Membrane</keyword>
<keyword id="KW-0479">Metal-binding</keyword>
<keyword id="KW-0594">Phospholipid biosynthesis</keyword>
<keyword id="KW-1208">Phospholipid metabolism</keyword>
<keyword id="KW-1185">Reference proteome</keyword>
<keyword id="KW-0808">Transferase</keyword>
<keyword id="KW-0812">Transmembrane</keyword>
<keyword id="KW-1133">Transmembrane helix</keyword>
<evidence type="ECO:0000250" key="1">
    <source>
        <dbReference type="UniProtKB" id="P9WPG7"/>
    </source>
</evidence>
<evidence type="ECO:0000255" key="2"/>
<evidence type="ECO:0000269" key="3">
    <source>
    </source>
</evidence>
<evidence type="ECO:0000269" key="4">
    <source>
    </source>
</evidence>
<evidence type="ECO:0000269" key="5">
    <source>
    </source>
</evidence>
<evidence type="ECO:0000269" key="6">
    <source>
    </source>
</evidence>
<evidence type="ECO:0000305" key="7"/>
<gene>
    <name type="primary">PIS1</name>
    <name type="ordered locus">At1g68000</name>
    <name type="ORF">T23K23.15</name>
</gene>
<organism>
    <name type="scientific">Arabidopsis thaliana</name>
    <name type="common">Mouse-ear cress</name>
    <dbReference type="NCBI Taxonomy" id="3702"/>
    <lineage>
        <taxon>Eukaryota</taxon>
        <taxon>Viridiplantae</taxon>
        <taxon>Streptophyta</taxon>
        <taxon>Embryophyta</taxon>
        <taxon>Tracheophyta</taxon>
        <taxon>Spermatophyta</taxon>
        <taxon>Magnoliopsida</taxon>
        <taxon>eudicotyledons</taxon>
        <taxon>Gunneridae</taxon>
        <taxon>Pentapetalae</taxon>
        <taxon>rosids</taxon>
        <taxon>malvids</taxon>
        <taxon>Brassicales</taxon>
        <taxon>Brassicaceae</taxon>
        <taxon>Camelineae</taxon>
        <taxon>Arabidopsis</taxon>
    </lineage>
</organism>
<proteinExistence type="evidence at protein level"/>
<accession>Q8LBA6</accession>
<accession>O81846</accession>
<reference key="1">
    <citation type="journal article" date="1999" name="Eur. J. Biochem.">
        <title>Identification of AtPIS, a phosphatidylinositol synthase from Arabidopsis.</title>
        <authorList>
            <person name="Collin S."/>
            <person name="Justin A.-M."/>
            <person name="Cantrel C."/>
            <person name="Arondel V."/>
            <person name="Kader J.-C."/>
        </authorList>
    </citation>
    <scope>NUCLEOTIDE SEQUENCE [MRNA]</scope>
    <scope>FUNCTION</scope>
    <scope>CATALYTIC ACTIVITY</scope>
    <scope>COFACTOR</scope>
</reference>
<reference key="2">
    <citation type="journal article" date="2000" name="Plant Mol. Biol.">
        <title>Cloning of Arabidopsis thaliana phosphatidylinositol synthase and functional expression in the yeast pis mutant.</title>
        <authorList>
            <person name="Xue H.-W."/>
            <person name="Hosaka K."/>
            <person name="Plesch G."/>
            <person name="Mueller-Roeber B."/>
        </authorList>
    </citation>
    <scope>NUCLEOTIDE SEQUENCE [MRNA]</scope>
    <scope>FUNCTION</scope>
    <scope>COFACTOR</scope>
    <scope>TISSUE SPECIFICITY</scope>
</reference>
<reference key="3">
    <citation type="journal article" date="2000" name="Nature">
        <title>Sequence and analysis of chromosome 1 of the plant Arabidopsis thaliana.</title>
        <authorList>
            <person name="Theologis A."/>
            <person name="Ecker J.R."/>
            <person name="Palm C.J."/>
            <person name="Federspiel N.A."/>
            <person name="Kaul S."/>
            <person name="White O."/>
            <person name="Alonso J."/>
            <person name="Altafi H."/>
            <person name="Araujo R."/>
            <person name="Bowman C.L."/>
            <person name="Brooks S.Y."/>
            <person name="Buehler E."/>
            <person name="Chan A."/>
            <person name="Chao Q."/>
            <person name="Chen H."/>
            <person name="Cheuk R.F."/>
            <person name="Chin C.W."/>
            <person name="Chung M.K."/>
            <person name="Conn L."/>
            <person name="Conway A.B."/>
            <person name="Conway A.R."/>
            <person name="Creasy T.H."/>
            <person name="Dewar K."/>
            <person name="Dunn P."/>
            <person name="Etgu P."/>
            <person name="Feldblyum T.V."/>
            <person name="Feng J.-D."/>
            <person name="Fong B."/>
            <person name="Fujii C.Y."/>
            <person name="Gill J.E."/>
            <person name="Goldsmith A.D."/>
            <person name="Haas B."/>
            <person name="Hansen N.F."/>
            <person name="Hughes B."/>
            <person name="Huizar L."/>
            <person name="Hunter J.L."/>
            <person name="Jenkins J."/>
            <person name="Johnson-Hopson C."/>
            <person name="Khan S."/>
            <person name="Khaykin E."/>
            <person name="Kim C.J."/>
            <person name="Koo H.L."/>
            <person name="Kremenetskaia I."/>
            <person name="Kurtz D.B."/>
            <person name="Kwan A."/>
            <person name="Lam B."/>
            <person name="Langin-Hooper S."/>
            <person name="Lee A."/>
            <person name="Lee J.M."/>
            <person name="Lenz C.A."/>
            <person name="Li J.H."/>
            <person name="Li Y.-P."/>
            <person name="Lin X."/>
            <person name="Liu S.X."/>
            <person name="Liu Z.A."/>
            <person name="Luros J.S."/>
            <person name="Maiti R."/>
            <person name="Marziali A."/>
            <person name="Militscher J."/>
            <person name="Miranda M."/>
            <person name="Nguyen M."/>
            <person name="Nierman W.C."/>
            <person name="Osborne B.I."/>
            <person name="Pai G."/>
            <person name="Peterson J."/>
            <person name="Pham P.K."/>
            <person name="Rizzo M."/>
            <person name="Rooney T."/>
            <person name="Rowley D."/>
            <person name="Sakano H."/>
            <person name="Salzberg S.L."/>
            <person name="Schwartz J.R."/>
            <person name="Shinn P."/>
            <person name="Southwick A.M."/>
            <person name="Sun H."/>
            <person name="Tallon L.J."/>
            <person name="Tambunga G."/>
            <person name="Toriumi M.J."/>
            <person name="Town C.D."/>
            <person name="Utterback T."/>
            <person name="Van Aken S."/>
            <person name="Vaysberg M."/>
            <person name="Vysotskaia V.S."/>
            <person name="Walker M."/>
            <person name="Wu D."/>
            <person name="Yu G."/>
            <person name="Fraser C.M."/>
            <person name="Venter J.C."/>
            <person name="Davis R.W."/>
        </authorList>
    </citation>
    <scope>NUCLEOTIDE SEQUENCE [LARGE SCALE GENOMIC DNA]</scope>
    <source>
        <strain>cv. Columbia</strain>
    </source>
</reference>
<reference key="4">
    <citation type="journal article" date="2017" name="Plant J.">
        <title>Araport11: a complete reannotation of the Arabidopsis thaliana reference genome.</title>
        <authorList>
            <person name="Cheng C.Y."/>
            <person name="Krishnakumar V."/>
            <person name="Chan A.P."/>
            <person name="Thibaud-Nissen F."/>
            <person name="Schobel S."/>
            <person name="Town C.D."/>
        </authorList>
    </citation>
    <scope>GENOME REANNOTATION</scope>
    <source>
        <strain>cv. Columbia</strain>
    </source>
</reference>
<reference key="5">
    <citation type="journal article" date="2003" name="Science">
        <title>Empirical analysis of transcriptional activity in the Arabidopsis genome.</title>
        <authorList>
            <person name="Yamada K."/>
            <person name="Lim J."/>
            <person name="Dale J.M."/>
            <person name="Chen H."/>
            <person name="Shinn P."/>
            <person name="Palm C.J."/>
            <person name="Southwick A.M."/>
            <person name="Wu H.C."/>
            <person name="Kim C.J."/>
            <person name="Nguyen M."/>
            <person name="Pham P.K."/>
            <person name="Cheuk R.F."/>
            <person name="Karlin-Newmann G."/>
            <person name="Liu S.X."/>
            <person name="Lam B."/>
            <person name="Sakano H."/>
            <person name="Wu T."/>
            <person name="Yu G."/>
            <person name="Miranda M."/>
            <person name="Quach H.L."/>
            <person name="Tripp M."/>
            <person name="Chang C.H."/>
            <person name="Lee J.M."/>
            <person name="Toriumi M.J."/>
            <person name="Chan M.M."/>
            <person name="Tang C.C."/>
            <person name="Onodera C.S."/>
            <person name="Deng J.M."/>
            <person name="Akiyama K."/>
            <person name="Ansari Y."/>
            <person name="Arakawa T."/>
            <person name="Banh J."/>
            <person name="Banno F."/>
            <person name="Bowser L."/>
            <person name="Brooks S.Y."/>
            <person name="Carninci P."/>
            <person name="Chao Q."/>
            <person name="Choy N."/>
            <person name="Enju A."/>
            <person name="Goldsmith A.D."/>
            <person name="Gurjal M."/>
            <person name="Hansen N.F."/>
            <person name="Hayashizaki Y."/>
            <person name="Johnson-Hopson C."/>
            <person name="Hsuan V.W."/>
            <person name="Iida K."/>
            <person name="Karnes M."/>
            <person name="Khan S."/>
            <person name="Koesema E."/>
            <person name="Ishida J."/>
            <person name="Jiang P.X."/>
            <person name="Jones T."/>
            <person name="Kawai J."/>
            <person name="Kamiya A."/>
            <person name="Meyers C."/>
            <person name="Nakajima M."/>
            <person name="Narusaka M."/>
            <person name="Seki M."/>
            <person name="Sakurai T."/>
            <person name="Satou M."/>
            <person name="Tamse R."/>
            <person name="Vaysberg M."/>
            <person name="Wallender E.K."/>
            <person name="Wong C."/>
            <person name="Yamamura Y."/>
            <person name="Yuan S."/>
            <person name="Shinozaki K."/>
            <person name="Davis R.W."/>
            <person name="Theologis A."/>
            <person name="Ecker J.R."/>
        </authorList>
    </citation>
    <scope>NUCLEOTIDE SEQUENCE [LARGE SCALE MRNA]</scope>
    <source>
        <strain>cv. Columbia</strain>
    </source>
</reference>
<reference key="6">
    <citation type="submission" date="2002-03" db="EMBL/GenBank/DDBJ databases">
        <title>Full-length cDNA from Arabidopsis thaliana.</title>
        <authorList>
            <person name="Brover V.V."/>
            <person name="Troukhan M.E."/>
            <person name="Alexandrov N.A."/>
            <person name="Lu Y.-P."/>
            <person name="Flavell R.B."/>
            <person name="Feldmann K.A."/>
        </authorList>
    </citation>
    <scope>NUCLEOTIDE SEQUENCE [LARGE SCALE MRNA]</scope>
</reference>
<reference key="7">
    <citation type="journal article" date="2002" name="Eur. J. Biochem.">
        <title>Phosphatidylinositol synthesis and exchange of the inositol head are catalysed by the single phosphatidylinositol synthase 1 from Arabidopsis.</title>
        <authorList>
            <person name="Justin A.-M."/>
            <person name="Kader J.-C."/>
            <person name="Collin S."/>
        </authorList>
    </citation>
    <scope>FUNCTION</scope>
</reference>
<reference key="8">
    <citation type="journal article" date="2003" name="Biochim. Biophys. Acta">
        <title>Synthetic capacity of Arabidopsis phosphatidylinositol synthase 1 expressed in Escherichia coli.</title>
        <authorList>
            <person name="Justin A.-M."/>
            <person name="Kader J.-C."/>
            <person name="Collin S."/>
        </authorList>
    </citation>
    <scope>FUNCTION</scope>
    <scope>BIOPHYSICOCHEMICAL PROPERTIES</scope>
</reference>
<name>PIS1_ARATH</name>
<comment type="function">
    <text evidence="3 4 5 6">Catalyzes the biosynthesis of phosphatidylinositol (PtdIns) as well as PtdIns:inositol exchange reaction. May thus act to reduce an excessive cellular PtdIns content. The exchange activity is due to the reverse reaction of PtdIns synthase and is dependent on CMP, which is tightly bound to the enzyme.</text>
</comment>
<comment type="catalytic activity">
    <reaction evidence="3">
        <text>a CDP-1,2-diacyl-sn-glycerol + myo-inositol = a 1,2-diacyl-sn-glycero-3-phospho-(1D-myo-inositol) + CMP + H(+)</text>
        <dbReference type="Rhea" id="RHEA:11580"/>
        <dbReference type="ChEBI" id="CHEBI:15378"/>
        <dbReference type="ChEBI" id="CHEBI:17268"/>
        <dbReference type="ChEBI" id="CHEBI:57880"/>
        <dbReference type="ChEBI" id="CHEBI:58332"/>
        <dbReference type="ChEBI" id="CHEBI:60377"/>
        <dbReference type="EC" id="2.7.8.11"/>
    </reaction>
</comment>
<comment type="cofactor">
    <cofactor evidence="3 4">
        <name>Mg(2+)</name>
        <dbReference type="ChEBI" id="CHEBI:18420"/>
    </cofactor>
    <cofactor evidence="3 4">
        <name>Mn(2+)</name>
        <dbReference type="ChEBI" id="CHEBI:29035"/>
    </cofactor>
</comment>
<comment type="biophysicochemical properties">
    <kinetics>
        <KM evidence="6">400 uM for myo-inositol</KM>
        <KM evidence="6">10 uM for CDP-diacylglycerol</KM>
    </kinetics>
</comment>
<comment type="subcellular location">
    <subcellularLocation>
        <location evidence="2">Membrane</location>
        <topology evidence="2">Multi-pass membrane protein</topology>
    </subcellularLocation>
</comment>
<comment type="tissue specificity">
    <text evidence="4">Expressed in stems, flowers, shoots and roots. Present in epidermal tissues.</text>
</comment>
<comment type="similarity">
    <text evidence="7">Belongs to the CDP-alcohol phosphatidyltransferase class-I family.</text>
</comment>
<feature type="chain" id="PRO_0000056805" description="CDP-diacylglycerol--inositol 3-phosphatidyltransferase 1">
    <location>
        <begin position="1"/>
        <end position="227"/>
    </location>
</feature>
<feature type="transmembrane region" description="Helical" evidence="2">
    <location>
        <begin position="12"/>
        <end position="36"/>
    </location>
</feature>
<feature type="transmembrane region" description="Helical" evidence="2">
    <location>
        <begin position="42"/>
        <end position="61"/>
    </location>
</feature>
<feature type="transmembrane region" description="Helical" evidence="2">
    <location>
        <begin position="73"/>
        <end position="95"/>
    </location>
</feature>
<feature type="transmembrane region" description="Helical" evidence="2">
    <location>
        <begin position="101"/>
        <end position="122"/>
    </location>
</feature>
<feature type="transmembrane region" description="Helical" evidence="2">
    <location>
        <begin position="142"/>
        <end position="165"/>
    </location>
</feature>
<feature type="transmembrane region" description="Helical" evidence="2">
    <location>
        <begin position="177"/>
        <end position="200"/>
    </location>
</feature>
<feature type="active site" description="Proton acceptor" evidence="1">
    <location>
        <position position="80"/>
    </location>
</feature>
<feature type="binding site" evidence="1">
    <location>
        <position position="55"/>
    </location>
    <ligand>
        <name>Mg(2+)</name>
        <dbReference type="ChEBI" id="CHEBI:18420"/>
        <label>1</label>
    </ligand>
</feature>
<feature type="binding site" evidence="1">
    <location>
        <position position="55"/>
    </location>
    <ligand>
        <name>Mg(2+)</name>
        <dbReference type="ChEBI" id="CHEBI:18420"/>
        <label>2</label>
    </ligand>
</feature>
<feature type="binding site" evidence="1">
    <location>
        <position position="58"/>
    </location>
    <ligand>
        <name>Mg(2+)</name>
        <dbReference type="ChEBI" id="CHEBI:18420"/>
        <label>1</label>
    </ligand>
</feature>
<feature type="binding site" evidence="1">
    <location>
        <position position="59"/>
    </location>
    <ligand>
        <name>a CDP-1,2-diacyl-sn-glycerol</name>
        <dbReference type="ChEBI" id="CHEBI:58332"/>
    </ligand>
</feature>
<feature type="binding site" evidence="1">
    <location>
        <position position="63"/>
    </location>
    <ligand>
        <name>a CDP-1,2-diacyl-sn-glycerol</name>
        <dbReference type="ChEBI" id="CHEBI:58332"/>
    </ligand>
</feature>
<feature type="binding site" evidence="1">
    <location>
        <position position="69"/>
    </location>
    <ligand>
        <name>a CDP-1,2-diacyl-sn-glycerol</name>
        <dbReference type="ChEBI" id="CHEBI:58332"/>
    </ligand>
</feature>
<feature type="binding site" evidence="1">
    <location>
        <position position="76"/>
    </location>
    <ligand>
        <name>Mg(2+)</name>
        <dbReference type="ChEBI" id="CHEBI:18420"/>
        <label>1</label>
    </ligand>
</feature>
<feature type="binding site" evidence="1">
    <location>
        <position position="76"/>
    </location>
    <ligand>
        <name>Mg(2+)</name>
        <dbReference type="ChEBI" id="CHEBI:18420"/>
        <label>2</label>
    </ligand>
</feature>
<feature type="binding site" evidence="1">
    <location>
        <position position="80"/>
    </location>
    <ligand>
        <name>Mg(2+)</name>
        <dbReference type="ChEBI" id="CHEBI:18420"/>
        <label>2</label>
    </ligand>
</feature>
<feature type="sequence conflict" description="In Ref. 6; AAM64877." evidence="7" ref="6">
    <original>I</original>
    <variation>L</variation>
    <location>
        <position position="221"/>
    </location>
</feature>
<protein>
    <recommendedName>
        <fullName>CDP-diacylglycerol--inositol 3-phosphatidyltransferase 1</fullName>
        <ecNumber evidence="3">2.7.8.11</ecNumber>
    </recommendedName>
    <alternativeName>
        <fullName>Phosphatidylinositol synthase 1</fullName>
        <shortName>AtPIS1</shortName>
        <shortName>PI synthase 1</shortName>
        <shortName>PtdIns synthase 1</shortName>
    </alternativeName>
</protein>
<sequence length="227" mass="25861">MAKKERPRPEKLSVYLYIPNIVGYMRVLLNCVAFAVCFSNKPLFSVLYFFSFCCDAVDGWVARRFNQVSTFGAVLDMVTDRVSTACLLVILSQIYRPSLVFLSLLALDIASHWLQMYSTFLAGKSSHKDVKDSTSWLFRLYYGNRIFMCYCCVSCEVLYIILLLIAKNQSENLLNVVVATLTQISPLSFLLALTLFGWSMKQTINVIQMKTAADVCVLYDIEKQQKP</sequence>